<dbReference type="EMBL" id="CH981529">
    <property type="protein sequence ID" value="EDK46164.1"/>
    <property type="molecule type" value="Genomic_DNA"/>
</dbReference>
<dbReference type="RefSeq" id="XP_001524373.1">
    <property type="nucleotide sequence ID" value="XM_001524323.1"/>
</dbReference>
<dbReference type="SMR" id="A5E406"/>
<dbReference type="GeneID" id="5231753"/>
<dbReference type="KEGG" id="lel:PVL30_004067"/>
<dbReference type="VEuPathDB" id="FungiDB:LELG_04345"/>
<dbReference type="eggNOG" id="ENOG502S359">
    <property type="taxonomic scope" value="Eukaryota"/>
</dbReference>
<dbReference type="HOGENOM" id="CLU_438800_0_0_1"/>
<dbReference type="InParanoid" id="A5E406"/>
<dbReference type="OMA" id="MYQNQFP"/>
<dbReference type="OrthoDB" id="5396806at2759"/>
<dbReference type="Proteomes" id="UP000001996">
    <property type="component" value="Unassembled WGS sequence"/>
</dbReference>
<dbReference type="GO" id="GO:0000781">
    <property type="term" value="C:chromosome, telomeric region"/>
    <property type="evidence" value="ECO:0007669"/>
    <property type="project" value="UniProtKB-SubCell"/>
</dbReference>
<dbReference type="GO" id="GO:0005737">
    <property type="term" value="C:cytoplasm"/>
    <property type="evidence" value="ECO:0007669"/>
    <property type="project" value="UniProtKB-SubCell"/>
</dbReference>
<dbReference type="GO" id="GO:0005634">
    <property type="term" value="C:nucleus"/>
    <property type="evidence" value="ECO:0007669"/>
    <property type="project" value="UniProtKB-SubCell"/>
</dbReference>
<dbReference type="GO" id="GO:0003677">
    <property type="term" value="F:DNA binding"/>
    <property type="evidence" value="ECO:0007669"/>
    <property type="project" value="UniProtKB-KW"/>
</dbReference>
<dbReference type="GO" id="GO:0043130">
    <property type="term" value="F:ubiquitin binding"/>
    <property type="evidence" value="ECO:0007669"/>
    <property type="project" value="InterPro"/>
</dbReference>
<dbReference type="GO" id="GO:0006281">
    <property type="term" value="P:DNA repair"/>
    <property type="evidence" value="ECO:0007669"/>
    <property type="project" value="UniProtKB-KW"/>
</dbReference>
<dbReference type="CDD" id="cd14368">
    <property type="entry name" value="CUE_DEF1_like"/>
    <property type="match status" value="1"/>
</dbReference>
<dbReference type="InterPro" id="IPR003892">
    <property type="entry name" value="CUE"/>
</dbReference>
<dbReference type="InterPro" id="IPR041803">
    <property type="entry name" value="DEF1_CUE"/>
</dbReference>
<dbReference type="Pfam" id="PF02845">
    <property type="entry name" value="CUE"/>
    <property type="match status" value="1"/>
</dbReference>
<dbReference type="PROSITE" id="PS51140">
    <property type="entry name" value="CUE"/>
    <property type="match status" value="1"/>
</dbReference>
<keyword id="KW-0158">Chromosome</keyword>
<keyword id="KW-0963">Cytoplasm</keyword>
<keyword id="KW-0227">DNA damage</keyword>
<keyword id="KW-0234">DNA repair</keyword>
<keyword id="KW-0238">DNA-binding</keyword>
<keyword id="KW-0539">Nucleus</keyword>
<keyword id="KW-1185">Reference proteome</keyword>
<keyword id="KW-0779">Telomere</keyword>
<keyword id="KW-0832">Ubl conjugation</keyword>
<keyword id="KW-0833">Ubl conjugation pathway</keyword>
<name>DEF1_LODEL</name>
<evidence type="ECO:0000250" key="1">
    <source>
        <dbReference type="UniProtKB" id="P35732"/>
    </source>
</evidence>
<evidence type="ECO:0000255" key="2">
    <source>
        <dbReference type="PROSITE-ProRule" id="PRU00468"/>
    </source>
</evidence>
<evidence type="ECO:0000256" key="3">
    <source>
        <dbReference type="SAM" id="MobiDB-lite"/>
    </source>
</evidence>
<evidence type="ECO:0000305" key="4"/>
<protein>
    <recommendedName>
        <fullName>RNA polymerase II degradation factor 1</fullName>
    </recommendedName>
</protein>
<proteinExistence type="inferred from homology"/>
<accession>A5E406</accession>
<feature type="chain" id="PRO_0000405670" description="RNA polymerase II degradation factor 1">
    <location>
        <begin position="1"/>
        <end position="770"/>
    </location>
</feature>
<feature type="domain" description="CUE" evidence="2">
    <location>
        <begin position="30"/>
        <end position="73"/>
    </location>
</feature>
<feature type="region of interest" description="Disordered" evidence="3">
    <location>
        <begin position="1"/>
        <end position="43"/>
    </location>
</feature>
<feature type="region of interest" description="Disordered" evidence="3">
    <location>
        <begin position="74"/>
        <end position="361"/>
    </location>
</feature>
<feature type="region of interest" description="Disordered" evidence="3">
    <location>
        <begin position="382"/>
        <end position="530"/>
    </location>
</feature>
<feature type="region of interest" description="Disordered" evidence="3">
    <location>
        <begin position="567"/>
        <end position="595"/>
    </location>
</feature>
<feature type="region of interest" description="Disordered" evidence="3">
    <location>
        <begin position="632"/>
        <end position="749"/>
    </location>
</feature>
<feature type="compositionally biased region" description="Low complexity" evidence="3">
    <location>
        <begin position="18"/>
        <end position="32"/>
    </location>
</feature>
<feature type="compositionally biased region" description="Basic and acidic residues" evidence="3">
    <location>
        <begin position="74"/>
        <end position="92"/>
    </location>
</feature>
<feature type="compositionally biased region" description="Polar residues" evidence="3">
    <location>
        <begin position="95"/>
        <end position="122"/>
    </location>
</feature>
<feature type="compositionally biased region" description="Polar residues" evidence="3">
    <location>
        <begin position="136"/>
        <end position="148"/>
    </location>
</feature>
<feature type="compositionally biased region" description="Low complexity" evidence="3">
    <location>
        <begin position="158"/>
        <end position="167"/>
    </location>
</feature>
<feature type="compositionally biased region" description="Polar residues" evidence="3">
    <location>
        <begin position="175"/>
        <end position="184"/>
    </location>
</feature>
<feature type="compositionally biased region" description="Basic and acidic residues" evidence="3">
    <location>
        <begin position="185"/>
        <end position="219"/>
    </location>
</feature>
<feature type="compositionally biased region" description="Low complexity" evidence="3">
    <location>
        <begin position="220"/>
        <end position="231"/>
    </location>
</feature>
<feature type="compositionally biased region" description="Low complexity" evidence="3">
    <location>
        <begin position="267"/>
        <end position="306"/>
    </location>
</feature>
<feature type="compositionally biased region" description="Low complexity" evidence="3">
    <location>
        <begin position="335"/>
        <end position="361"/>
    </location>
</feature>
<feature type="compositionally biased region" description="Basic and acidic residues" evidence="3">
    <location>
        <begin position="392"/>
        <end position="402"/>
    </location>
</feature>
<feature type="compositionally biased region" description="Low complexity" evidence="3">
    <location>
        <begin position="404"/>
        <end position="476"/>
    </location>
</feature>
<feature type="compositionally biased region" description="Low complexity" evidence="3">
    <location>
        <begin position="484"/>
        <end position="530"/>
    </location>
</feature>
<feature type="compositionally biased region" description="Polar residues" evidence="3">
    <location>
        <begin position="573"/>
        <end position="585"/>
    </location>
</feature>
<feature type="compositionally biased region" description="Low complexity" evidence="3">
    <location>
        <begin position="586"/>
        <end position="595"/>
    </location>
</feature>
<feature type="compositionally biased region" description="Low complexity" evidence="3">
    <location>
        <begin position="632"/>
        <end position="648"/>
    </location>
</feature>
<feature type="compositionally biased region" description="Polar residues" evidence="3">
    <location>
        <begin position="649"/>
        <end position="661"/>
    </location>
</feature>
<feature type="compositionally biased region" description="Low complexity" evidence="3">
    <location>
        <begin position="668"/>
        <end position="684"/>
    </location>
</feature>
<feature type="compositionally biased region" description="Low complexity" evidence="3">
    <location>
        <begin position="691"/>
        <end position="713"/>
    </location>
</feature>
<feature type="compositionally biased region" description="Low complexity" evidence="3">
    <location>
        <begin position="720"/>
        <end position="749"/>
    </location>
</feature>
<organism>
    <name type="scientific">Lodderomyces elongisporus (strain ATCC 11503 / CBS 2605 / JCM 1781 / NBRC 1676 / NRRL YB-4239)</name>
    <name type="common">Yeast</name>
    <name type="synonym">Saccharomyces elongisporus</name>
    <dbReference type="NCBI Taxonomy" id="379508"/>
    <lineage>
        <taxon>Eukaryota</taxon>
        <taxon>Fungi</taxon>
        <taxon>Dikarya</taxon>
        <taxon>Ascomycota</taxon>
        <taxon>Saccharomycotina</taxon>
        <taxon>Pichiomycetes</taxon>
        <taxon>Debaryomycetaceae</taxon>
        <taxon>Candida/Lodderomyces clade</taxon>
        <taxon>Lodderomyces</taxon>
    </lineage>
</organism>
<sequence length="770" mass="83990">MSTTQRKSFKNQLKRFNNETSGSTNSTNSNASPELTSLTEMFPDWESDELNSLLQEKRNSLEVVIDLIVNNKVSKWEPIKKEKKEKKVKDDTDGFQANNTTSSTHLGSQSGKPFNKFKSSNKPPRKQGNVTKKPIKSTSDNNKPTTSTSNGAEKSKESSASGSWASALGEDTAKPATSKNTKPTTELEKAPEQDSNKDETPLESEQKQQEPQEQAEQKPKTTASATTTSEPAPKPVLKEAVIPSLNQGSWASAITPKTKPKPKPKAVKTAPSPTQATEPAQQQQQQQQSEQSEQSEQPEQPQTSQADQNESVSKPEEPVVSESQTSAQEKTLEIQEPVASAAAPAAQAPASSSSAVEAGAQGPQVVLPTSLQGVNSVGISFGSLSLGEEEPKDSHKDLREQFDQTQQKYEQPQEQPQPQQQQQQQAQAPAPSQQQQQQQQRYDLYEQQPQQSTNYQQQPQQPQQSQQSQQPQQQGQGQFGKHASQQSVPSQGQVPQQSQPTQQQYDYYSQFQQQQYPQQAGQPGAQFGGYPAYDYSAFNQQAYAASPANAHAATTGSAAAYNQYAQQSVGAADSTQSPVSAQNVLQQQQAQQQQQQIPTPFGYPYYNYYYNNPYFGGAGGLGNNGFASANTGSIGQQTQQGAQQASQQLNVPSATQPSGVSANGFGAQQQYYNPNQYSNRYPGYSYPPQPQQQQQPGQQQHQQQPGQHAGQSATGSESDAAQQGQGQGQGQQSHPQSGAPQQPVVPQYGAYQQYPQYGYQDTTQYRGGWY</sequence>
<comment type="function">
    <text evidence="1">Recruits the ubiquitination machinery to RNA polymerase II for polyubiquitination, removal and degradation, when the transcription-coupled repair (TCR) factor RAD26 fails to efficiently displace stalled RNA polymerase II. Also involved in telomere length regulation. Binds DNA.</text>
</comment>
<comment type="subunit">
    <text evidence="1">Homodimer; may form higher order oligomers. Interacts with the large RNA polymerase II subunit RPO21; the interaction is direct and serves to bridge RPO21 to the Elongin complex in a manner dependent on transcription stress. Interacts with RAD26.</text>
</comment>
<comment type="subcellular location">
    <subcellularLocation>
        <location evidence="1">Cytoplasm</location>
    </subcellularLocation>
    <subcellularLocation>
        <location evidence="1">Nucleus</location>
    </subcellularLocation>
    <subcellularLocation>
        <location evidence="1">Chromosome</location>
        <location evidence="1">Telomere</location>
    </subcellularLocation>
    <text evidence="1">During transcription stress, localizes to the nucleus following proteolytic cleavage by the proteasome.</text>
</comment>
<comment type="PTM">
    <text evidence="1">Ubiquitinated.</text>
</comment>
<comment type="PTM">
    <text evidence="1">Proteolytically cleaved by the proteasome in response to transcription stress; the resulting N-terminal form constitutes the activated nuclear form and the C-terminal portion is degraded.</text>
</comment>
<comment type="similarity">
    <text evidence="4">Belongs to the DEF1 family.</text>
</comment>
<reference key="1">
    <citation type="journal article" date="2009" name="Nature">
        <title>Evolution of pathogenicity and sexual reproduction in eight Candida genomes.</title>
        <authorList>
            <person name="Butler G."/>
            <person name="Rasmussen M.D."/>
            <person name="Lin M.F."/>
            <person name="Santos M.A.S."/>
            <person name="Sakthikumar S."/>
            <person name="Munro C.A."/>
            <person name="Rheinbay E."/>
            <person name="Grabherr M."/>
            <person name="Forche A."/>
            <person name="Reedy J.L."/>
            <person name="Agrafioti I."/>
            <person name="Arnaud M.B."/>
            <person name="Bates S."/>
            <person name="Brown A.J.P."/>
            <person name="Brunke S."/>
            <person name="Costanzo M.C."/>
            <person name="Fitzpatrick D.A."/>
            <person name="de Groot P.W.J."/>
            <person name="Harris D."/>
            <person name="Hoyer L.L."/>
            <person name="Hube B."/>
            <person name="Klis F.M."/>
            <person name="Kodira C."/>
            <person name="Lennard N."/>
            <person name="Logue M.E."/>
            <person name="Martin R."/>
            <person name="Neiman A.M."/>
            <person name="Nikolaou E."/>
            <person name="Quail M.A."/>
            <person name="Quinn J."/>
            <person name="Santos M.C."/>
            <person name="Schmitzberger F.F."/>
            <person name="Sherlock G."/>
            <person name="Shah P."/>
            <person name="Silverstein K.A.T."/>
            <person name="Skrzypek M.S."/>
            <person name="Soll D."/>
            <person name="Staggs R."/>
            <person name="Stansfield I."/>
            <person name="Stumpf M.P.H."/>
            <person name="Sudbery P.E."/>
            <person name="Srikantha T."/>
            <person name="Zeng Q."/>
            <person name="Berman J."/>
            <person name="Berriman M."/>
            <person name="Heitman J."/>
            <person name="Gow N.A.R."/>
            <person name="Lorenz M.C."/>
            <person name="Birren B.W."/>
            <person name="Kellis M."/>
            <person name="Cuomo C.A."/>
        </authorList>
    </citation>
    <scope>NUCLEOTIDE SEQUENCE [LARGE SCALE GENOMIC DNA]</scope>
    <source>
        <strain>ATCC 11503 / BCRC 21390 / CBS 2605 / JCM 1781 / NBRC 1676 / NRRL YB-4239</strain>
    </source>
</reference>
<gene>
    <name type="primary">DEF1</name>
    <name type="ORF">LELG_04345</name>
</gene>